<protein>
    <recommendedName>
        <fullName>NADH-ubiquinone oxidoreductase chain 3</fullName>
        <ecNumber>7.1.1.2</ecNumber>
    </recommendedName>
    <alternativeName>
        <fullName>NADH dehydrogenase subunit 3</fullName>
    </alternativeName>
</protein>
<name>NU3M_WICCA</name>
<comment type="function">
    <text evidence="1">Core subunit of the mitochondrial membrane respiratory chain NADH dehydrogenase (Complex I) that is believed to belong to the minimal assembly required for catalysis. Complex I functions in the transfer of electrons from NADH to the respiratory chain. The immediate electron acceptor for the enzyme is believed to be ubiquinone (By similarity).</text>
</comment>
<comment type="catalytic activity">
    <reaction>
        <text>a ubiquinone + NADH + 5 H(+)(in) = a ubiquinol + NAD(+) + 4 H(+)(out)</text>
        <dbReference type="Rhea" id="RHEA:29091"/>
        <dbReference type="Rhea" id="RHEA-COMP:9565"/>
        <dbReference type="Rhea" id="RHEA-COMP:9566"/>
        <dbReference type="ChEBI" id="CHEBI:15378"/>
        <dbReference type="ChEBI" id="CHEBI:16389"/>
        <dbReference type="ChEBI" id="CHEBI:17976"/>
        <dbReference type="ChEBI" id="CHEBI:57540"/>
        <dbReference type="ChEBI" id="CHEBI:57945"/>
        <dbReference type="EC" id="7.1.1.2"/>
    </reaction>
</comment>
<comment type="subcellular location">
    <subcellularLocation>
        <location evidence="1">Mitochondrion membrane</location>
        <topology evidence="1">Multi-pass membrane protein</topology>
    </subcellularLocation>
</comment>
<comment type="similarity">
    <text evidence="3">Belongs to the complex I subunit 3 family.</text>
</comment>
<accession>P48913</accession>
<reference key="1">
    <citation type="journal article" date="1995" name="Curr. Genet.">
        <title>The complete mitochondrial DNA sequence of Hansenula wingei reveals new characteristics of yeast mitochondria.</title>
        <authorList>
            <person name="Sekito T."/>
            <person name="Okamoto K."/>
            <person name="Kitano H."/>
            <person name="Yoshida K."/>
        </authorList>
    </citation>
    <scope>NUCLEOTIDE SEQUENCE [LARGE SCALE GENOMIC DNA]</scope>
    <source>
        <strain>21</strain>
    </source>
</reference>
<dbReference type="EC" id="7.1.1.2"/>
<dbReference type="EMBL" id="D31785">
    <property type="protein sequence ID" value="BAA06574.2"/>
    <property type="molecule type" value="Genomic_DNA"/>
</dbReference>
<dbReference type="PIR" id="S58751">
    <property type="entry name" value="S58751"/>
</dbReference>
<dbReference type="RefSeq" id="NP_038219.1">
    <property type="nucleotide sequence ID" value="NC_001762.1"/>
</dbReference>
<dbReference type="SMR" id="P48913"/>
<dbReference type="GeneID" id="800536"/>
<dbReference type="GO" id="GO:0031966">
    <property type="term" value="C:mitochondrial membrane"/>
    <property type="evidence" value="ECO:0007669"/>
    <property type="project" value="UniProtKB-SubCell"/>
</dbReference>
<dbReference type="GO" id="GO:0030964">
    <property type="term" value="C:NADH dehydrogenase complex"/>
    <property type="evidence" value="ECO:0007669"/>
    <property type="project" value="TreeGrafter"/>
</dbReference>
<dbReference type="GO" id="GO:0008137">
    <property type="term" value="F:NADH dehydrogenase (ubiquinone) activity"/>
    <property type="evidence" value="ECO:0007669"/>
    <property type="project" value="UniProtKB-EC"/>
</dbReference>
<dbReference type="Gene3D" id="1.20.58.1610">
    <property type="entry name" value="NADH:ubiquinone/plastoquinone oxidoreductase, chain 3"/>
    <property type="match status" value="1"/>
</dbReference>
<dbReference type="InterPro" id="IPR000440">
    <property type="entry name" value="NADH_UbQ/plastoQ_OxRdtase_su3"/>
</dbReference>
<dbReference type="InterPro" id="IPR038430">
    <property type="entry name" value="NDAH_ubi_oxred_su3_sf"/>
</dbReference>
<dbReference type="PANTHER" id="PTHR11058">
    <property type="entry name" value="NADH-UBIQUINONE OXIDOREDUCTASE CHAIN 3"/>
    <property type="match status" value="1"/>
</dbReference>
<dbReference type="PANTHER" id="PTHR11058:SF9">
    <property type="entry name" value="NADH-UBIQUINONE OXIDOREDUCTASE CHAIN 3"/>
    <property type="match status" value="1"/>
</dbReference>
<dbReference type="Pfam" id="PF00507">
    <property type="entry name" value="Oxidored_q4"/>
    <property type="match status" value="1"/>
</dbReference>
<keyword id="KW-0249">Electron transport</keyword>
<keyword id="KW-0472">Membrane</keyword>
<keyword id="KW-0496">Mitochondrion</keyword>
<keyword id="KW-0520">NAD</keyword>
<keyword id="KW-0679">Respiratory chain</keyword>
<keyword id="KW-1278">Translocase</keyword>
<keyword id="KW-0812">Transmembrane</keyword>
<keyword id="KW-1133">Transmembrane helix</keyword>
<keyword id="KW-0813">Transport</keyword>
<keyword id="KW-0830">Ubiquinone</keyword>
<geneLocation type="mitochondrion"/>
<feature type="chain" id="PRO_0000117804" description="NADH-ubiquinone oxidoreductase chain 3">
    <location>
        <begin position="1"/>
        <end position="148"/>
    </location>
</feature>
<feature type="transmembrane region" description="Helical" evidence="2">
    <location>
        <begin position="19"/>
        <end position="39"/>
    </location>
</feature>
<feature type="transmembrane region" description="Helical" evidence="2">
    <location>
        <begin position="70"/>
        <end position="90"/>
    </location>
</feature>
<feature type="transmembrane region" description="Helical" evidence="2">
    <location>
        <begin position="99"/>
        <end position="119"/>
    </location>
</feature>
<proteinExistence type="inferred from homology"/>
<gene>
    <name type="primary">ND3</name>
</gene>
<organism>
    <name type="scientific">Wickerhamomyces canadensis</name>
    <name type="common">Yeast</name>
    <name type="synonym">Pichia canadensis</name>
    <dbReference type="NCBI Taxonomy" id="1156965"/>
    <lineage>
        <taxon>Eukaryota</taxon>
        <taxon>Fungi</taxon>
        <taxon>Dikarya</taxon>
        <taxon>Ascomycota</taxon>
        <taxon>Saccharomycotina</taxon>
        <taxon>Saccharomycetes</taxon>
        <taxon>Phaffomycetales</taxon>
        <taxon>Wickerhamomycetaceae</taxon>
        <taxon>Wickerhamomyces</taxon>
    </lineage>
</organism>
<sequence>MLNYFVYPYGIENDIGIKFYMILVPIISIVLIIINYIITNKSDNNINKTGPYECGFDSFRQSRTTYSIKFILIAILFLPFDLELTSILPYTLSIYNLNIYGLFILLYFLLPLIIGFIIEINLKAIYITKIFNRNVKSITSYVKYNNKI</sequence>
<evidence type="ECO:0000250" key="1"/>
<evidence type="ECO:0000255" key="2"/>
<evidence type="ECO:0000305" key="3"/>